<accession>Q6HCB4</accession>
<reference key="1">
    <citation type="journal article" date="2006" name="J. Bacteriol.">
        <title>Pathogenomic sequence analysis of Bacillus cereus and Bacillus thuringiensis isolates closely related to Bacillus anthracis.</title>
        <authorList>
            <person name="Han C.S."/>
            <person name="Xie G."/>
            <person name="Challacombe J.F."/>
            <person name="Altherr M.R."/>
            <person name="Bhotika S.S."/>
            <person name="Bruce D."/>
            <person name="Campbell C.S."/>
            <person name="Campbell M.L."/>
            <person name="Chen J."/>
            <person name="Chertkov O."/>
            <person name="Cleland C."/>
            <person name="Dimitrijevic M."/>
            <person name="Doggett N.A."/>
            <person name="Fawcett J.J."/>
            <person name="Glavina T."/>
            <person name="Goodwin L.A."/>
            <person name="Hill K.K."/>
            <person name="Hitchcock P."/>
            <person name="Jackson P.J."/>
            <person name="Keim P."/>
            <person name="Kewalramani A.R."/>
            <person name="Longmire J."/>
            <person name="Lucas S."/>
            <person name="Malfatti S."/>
            <person name="McMurry K."/>
            <person name="Meincke L.J."/>
            <person name="Misra M."/>
            <person name="Moseman B.L."/>
            <person name="Mundt M."/>
            <person name="Munk A.C."/>
            <person name="Okinaka R.T."/>
            <person name="Parson-Quintana B."/>
            <person name="Reilly L.P."/>
            <person name="Richardson P."/>
            <person name="Robinson D.L."/>
            <person name="Rubin E."/>
            <person name="Saunders E."/>
            <person name="Tapia R."/>
            <person name="Tesmer J.G."/>
            <person name="Thayer N."/>
            <person name="Thompson L.S."/>
            <person name="Tice H."/>
            <person name="Ticknor L.O."/>
            <person name="Wills P.L."/>
            <person name="Brettin T.S."/>
            <person name="Gilna P."/>
        </authorList>
    </citation>
    <scope>NUCLEOTIDE SEQUENCE [LARGE SCALE GENOMIC DNA]</scope>
    <source>
        <strain>97-27</strain>
    </source>
</reference>
<sequence length="399" mass="43277">MTKKRHLFTSESVTEGHPDKICDQISDSILDAILSKDANARVACETTVTTGLVLVAGEITTSTYVDIPKIVRETIQGIGYTRAKYGFDAETCAVLTSIDEQSADIAMGVDQALEAREGQMTDAEIEAIGAGDQGLMFGFACNETQELMPLPISLAHKLARRLTEVRKNDTLSYLRPDGKTQVTVEYDENGKPVRVDTIVISTQHHPDVTWEEIDRDLKEHVIKAVVPAELIDGETKFFINPTGRFVIGGPQGDAGLTGRKIIVDTYGGYARHGGGAFSGKDATKVDRSAAYAARYVAKNIVAAGLAEKAEVQLAYAIGVAQPVSISVDTFGTGKVSEDVLVELVRNNFDLRPAGIIKMLDLRRPIYKQTAAYGHFGRTDVDLTWERTDKAAALKEQAGL</sequence>
<name>METK_BACHK</name>
<dbReference type="EC" id="2.5.1.6" evidence="1"/>
<dbReference type="EMBL" id="AE017355">
    <property type="protein sequence ID" value="AAT60955.1"/>
    <property type="molecule type" value="Genomic_DNA"/>
</dbReference>
<dbReference type="RefSeq" id="WP_000163127.1">
    <property type="nucleotide sequence ID" value="NC_005957.1"/>
</dbReference>
<dbReference type="RefSeq" id="YP_038812.1">
    <property type="nucleotide sequence ID" value="NC_005957.1"/>
</dbReference>
<dbReference type="SMR" id="Q6HCB4"/>
<dbReference type="KEGG" id="btk:BT9727_4500"/>
<dbReference type="PATRIC" id="fig|281309.8.peg.4792"/>
<dbReference type="HOGENOM" id="CLU_041802_1_1_9"/>
<dbReference type="UniPathway" id="UPA00315">
    <property type="reaction ID" value="UER00080"/>
</dbReference>
<dbReference type="Proteomes" id="UP000001301">
    <property type="component" value="Chromosome"/>
</dbReference>
<dbReference type="GO" id="GO:0005737">
    <property type="term" value="C:cytoplasm"/>
    <property type="evidence" value="ECO:0007669"/>
    <property type="project" value="UniProtKB-SubCell"/>
</dbReference>
<dbReference type="GO" id="GO:0005524">
    <property type="term" value="F:ATP binding"/>
    <property type="evidence" value="ECO:0007669"/>
    <property type="project" value="UniProtKB-UniRule"/>
</dbReference>
<dbReference type="GO" id="GO:0000287">
    <property type="term" value="F:magnesium ion binding"/>
    <property type="evidence" value="ECO:0007669"/>
    <property type="project" value="UniProtKB-UniRule"/>
</dbReference>
<dbReference type="GO" id="GO:0004478">
    <property type="term" value="F:methionine adenosyltransferase activity"/>
    <property type="evidence" value="ECO:0007669"/>
    <property type="project" value="UniProtKB-UniRule"/>
</dbReference>
<dbReference type="GO" id="GO:0006730">
    <property type="term" value="P:one-carbon metabolic process"/>
    <property type="evidence" value="ECO:0007669"/>
    <property type="project" value="UniProtKB-KW"/>
</dbReference>
<dbReference type="GO" id="GO:0006556">
    <property type="term" value="P:S-adenosylmethionine biosynthetic process"/>
    <property type="evidence" value="ECO:0007669"/>
    <property type="project" value="UniProtKB-UniRule"/>
</dbReference>
<dbReference type="CDD" id="cd18079">
    <property type="entry name" value="S-AdoMet_synt"/>
    <property type="match status" value="1"/>
</dbReference>
<dbReference type="FunFam" id="3.30.300.10:FF:000003">
    <property type="entry name" value="S-adenosylmethionine synthase"/>
    <property type="match status" value="1"/>
</dbReference>
<dbReference type="FunFam" id="3.30.300.10:FF:000004">
    <property type="entry name" value="S-adenosylmethionine synthase"/>
    <property type="match status" value="1"/>
</dbReference>
<dbReference type="Gene3D" id="3.30.300.10">
    <property type="match status" value="3"/>
</dbReference>
<dbReference type="HAMAP" id="MF_00086">
    <property type="entry name" value="S_AdoMet_synth1"/>
    <property type="match status" value="1"/>
</dbReference>
<dbReference type="InterPro" id="IPR022631">
    <property type="entry name" value="ADOMET_SYNTHASE_CS"/>
</dbReference>
<dbReference type="InterPro" id="IPR022630">
    <property type="entry name" value="S-AdoMet_synt_C"/>
</dbReference>
<dbReference type="InterPro" id="IPR022629">
    <property type="entry name" value="S-AdoMet_synt_central"/>
</dbReference>
<dbReference type="InterPro" id="IPR022628">
    <property type="entry name" value="S-AdoMet_synt_N"/>
</dbReference>
<dbReference type="InterPro" id="IPR002133">
    <property type="entry name" value="S-AdoMet_synthetase"/>
</dbReference>
<dbReference type="InterPro" id="IPR022636">
    <property type="entry name" value="S-AdoMet_synthetase_sfam"/>
</dbReference>
<dbReference type="NCBIfam" id="TIGR01034">
    <property type="entry name" value="metK"/>
    <property type="match status" value="1"/>
</dbReference>
<dbReference type="PANTHER" id="PTHR11964">
    <property type="entry name" value="S-ADENOSYLMETHIONINE SYNTHETASE"/>
    <property type="match status" value="1"/>
</dbReference>
<dbReference type="Pfam" id="PF02773">
    <property type="entry name" value="S-AdoMet_synt_C"/>
    <property type="match status" value="1"/>
</dbReference>
<dbReference type="Pfam" id="PF02772">
    <property type="entry name" value="S-AdoMet_synt_M"/>
    <property type="match status" value="1"/>
</dbReference>
<dbReference type="Pfam" id="PF00438">
    <property type="entry name" value="S-AdoMet_synt_N"/>
    <property type="match status" value="1"/>
</dbReference>
<dbReference type="PIRSF" id="PIRSF000497">
    <property type="entry name" value="MAT"/>
    <property type="match status" value="1"/>
</dbReference>
<dbReference type="SUPFAM" id="SSF55973">
    <property type="entry name" value="S-adenosylmethionine synthetase"/>
    <property type="match status" value="3"/>
</dbReference>
<dbReference type="PROSITE" id="PS00376">
    <property type="entry name" value="ADOMET_SYNTHASE_1"/>
    <property type="match status" value="1"/>
</dbReference>
<dbReference type="PROSITE" id="PS00377">
    <property type="entry name" value="ADOMET_SYNTHASE_2"/>
    <property type="match status" value="1"/>
</dbReference>
<comment type="function">
    <text evidence="1">Catalyzes the formation of S-adenosylmethionine (AdoMet) from methionine and ATP. The overall synthetic reaction is composed of two sequential steps, AdoMet formation and the subsequent tripolyphosphate hydrolysis which occurs prior to release of AdoMet from the enzyme.</text>
</comment>
<comment type="catalytic activity">
    <reaction evidence="1">
        <text>L-methionine + ATP + H2O = S-adenosyl-L-methionine + phosphate + diphosphate</text>
        <dbReference type="Rhea" id="RHEA:21080"/>
        <dbReference type="ChEBI" id="CHEBI:15377"/>
        <dbReference type="ChEBI" id="CHEBI:30616"/>
        <dbReference type="ChEBI" id="CHEBI:33019"/>
        <dbReference type="ChEBI" id="CHEBI:43474"/>
        <dbReference type="ChEBI" id="CHEBI:57844"/>
        <dbReference type="ChEBI" id="CHEBI:59789"/>
        <dbReference type="EC" id="2.5.1.6"/>
    </reaction>
</comment>
<comment type="cofactor">
    <cofactor evidence="1">
        <name>Mg(2+)</name>
        <dbReference type="ChEBI" id="CHEBI:18420"/>
    </cofactor>
    <text evidence="1">Binds 2 divalent ions per subunit.</text>
</comment>
<comment type="cofactor">
    <cofactor evidence="1">
        <name>K(+)</name>
        <dbReference type="ChEBI" id="CHEBI:29103"/>
    </cofactor>
    <text evidence="1">Binds 1 potassium ion per subunit.</text>
</comment>
<comment type="pathway">
    <text evidence="1">Amino-acid biosynthesis; S-adenosyl-L-methionine biosynthesis; S-adenosyl-L-methionine from L-methionine: step 1/1.</text>
</comment>
<comment type="subunit">
    <text evidence="1">Homotetramer; dimer of dimers.</text>
</comment>
<comment type="subcellular location">
    <subcellularLocation>
        <location evidence="1">Cytoplasm</location>
    </subcellularLocation>
</comment>
<comment type="similarity">
    <text evidence="1">Belongs to the AdoMet synthase family.</text>
</comment>
<keyword id="KW-0067">ATP-binding</keyword>
<keyword id="KW-0963">Cytoplasm</keyword>
<keyword id="KW-0460">Magnesium</keyword>
<keyword id="KW-0479">Metal-binding</keyword>
<keyword id="KW-0547">Nucleotide-binding</keyword>
<keyword id="KW-0554">One-carbon metabolism</keyword>
<keyword id="KW-0630">Potassium</keyword>
<keyword id="KW-0808">Transferase</keyword>
<protein>
    <recommendedName>
        <fullName evidence="1">S-adenosylmethionine synthase</fullName>
        <shortName evidence="1">AdoMet synthase</shortName>
        <ecNumber evidence="1">2.5.1.6</ecNumber>
    </recommendedName>
    <alternativeName>
        <fullName evidence="1">MAT</fullName>
    </alternativeName>
    <alternativeName>
        <fullName evidence="1">Methionine adenosyltransferase</fullName>
    </alternativeName>
</protein>
<organism>
    <name type="scientific">Bacillus thuringiensis subsp. konkukian (strain 97-27)</name>
    <dbReference type="NCBI Taxonomy" id="281309"/>
    <lineage>
        <taxon>Bacteria</taxon>
        <taxon>Bacillati</taxon>
        <taxon>Bacillota</taxon>
        <taxon>Bacilli</taxon>
        <taxon>Bacillales</taxon>
        <taxon>Bacillaceae</taxon>
        <taxon>Bacillus</taxon>
        <taxon>Bacillus cereus group</taxon>
    </lineage>
</organism>
<feature type="chain" id="PRO_0000174489" description="S-adenosylmethionine synthase">
    <location>
        <begin position="1"/>
        <end position="399"/>
    </location>
</feature>
<feature type="region of interest" description="Flexible loop" evidence="1">
    <location>
        <begin position="101"/>
        <end position="111"/>
    </location>
</feature>
<feature type="binding site" description="in other chain" evidence="1">
    <location>
        <position position="17"/>
    </location>
    <ligand>
        <name>ATP</name>
        <dbReference type="ChEBI" id="CHEBI:30616"/>
        <note>ligand shared between two neighboring subunits</note>
    </ligand>
</feature>
<feature type="binding site" evidence="1">
    <location>
        <position position="19"/>
    </location>
    <ligand>
        <name>Mg(2+)</name>
        <dbReference type="ChEBI" id="CHEBI:18420"/>
    </ligand>
</feature>
<feature type="binding site" evidence="1">
    <location>
        <position position="45"/>
    </location>
    <ligand>
        <name>K(+)</name>
        <dbReference type="ChEBI" id="CHEBI:29103"/>
    </ligand>
</feature>
<feature type="binding site" description="in other chain" evidence="1">
    <location>
        <position position="58"/>
    </location>
    <ligand>
        <name>L-methionine</name>
        <dbReference type="ChEBI" id="CHEBI:57844"/>
        <note>ligand shared between two neighboring subunits</note>
    </ligand>
</feature>
<feature type="binding site" description="in other chain" evidence="1">
    <location>
        <position position="101"/>
    </location>
    <ligand>
        <name>L-methionine</name>
        <dbReference type="ChEBI" id="CHEBI:57844"/>
        <note>ligand shared between two neighboring subunits</note>
    </ligand>
</feature>
<feature type="binding site" description="in other chain" evidence="1">
    <location>
        <begin position="177"/>
        <end position="179"/>
    </location>
    <ligand>
        <name>ATP</name>
        <dbReference type="ChEBI" id="CHEBI:30616"/>
        <note>ligand shared between two neighboring subunits</note>
    </ligand>
</feature>
<feature type="binding site" description="in other chain" evidence="1">
    <location>
        <begin position="244"/>
        <end position="245"/>
    </location>
    <ligand>
        <name>ATP</name>
        <dbReference type="ChEBI" id="CHEBI:30616"/>
        <note>ligand shared between two neighboring subunits</note>
    </ligand>
</feature>
<feature type="binding site" evidence="1">
    <location>
        <position position="253"/>
    </location>
    <ligand>
        <name>ATP</name>
        <dbReference type="ChEBI" id="CHEBI:30616"/>
        <note>ligand shared between two neighboring subunits</note>
    </ligand>
</feature>
<feature type="binding site" evidence="1">
    <location>
        <position position="253"/>
    </location>
    <ligand>
        <name>L-methionine</name>
        <dbReference type="ChEBI" id="CHEBI:57844"/>
        <note>ligand shared between two neighboring subunits</note>
    </ligand>
</feature>
<feature type="binding site" description="in other chain" evidence="1">
    <location>
        <begin position="259"/>
        <end position="260"/>
    </location>
    <ligand>
        <name>ATP</name>
        <dbReference type="ChEBI" id="CHEBI:30616"/>
        <note>ligand shared between two neighboring subunits</note>
    </ligand>
</feature>
<feature type="binding site" evidence="1">
    <location>
        <position position="276"/>
    </location>
    <ligand>
        <name>ATP</name>
        <dbReference type="ChEBI" id="CHEBI:30616"/>
        <note>ligand shared between two neighboring subunits</note>
    </ligand>
</feature>
<feature type="binding site" evidence="1">
    <location>
        <position position="280"/>
    </location>
    <ligand>
        <name>ATP</name>
        <dbReference type="ChEBI" id="CHEBI:30616"/>
        <note>ligand shared between two neighboring subunits</note>
    </ligand>
</feature>
<feature type="binding site" description="in other chain" evidence="1">
    <location>
        <position position="284"/>
    </location>
    <ligand>
        <name>L-methionine</name>
        <dbReference type="ChEBI" id="CHEBI:57844"/>
        <note>ligand shared between two neighboring subunits</note>
    </ligand>
</feature>
<evidence type="ECO:0000255" key="1">
    <source>
        <dbReference type="HAMAP-Rule" id="MF_00086"/>
    </source>
</evidence>
<proteinExistence type="inferred from homology"/>
<gene>
    <name evidence="1" type="primary">metK</name>
    <name type="ordered locus">BT9727_4500</name>
</gene>